<gene>
    <name evidence="1" type="primary">ilvC</name>
    <name type="ordered locus">BURPS1710b_1421</name>
</gene>
<reference key="1">
    <citation type="journal article" date="2010" name="Genome Biol. Evol.">
        <title>Continuing evolution of Burkholderia mallei through genome reduction and large-scale rearrangements.</title>
        <authorList>
            <person name="Losada L."/>
            <person name="Ronning C.M."/>
            <person name="DeShazer D."/>
            <person name="Woods D."/>
            <person name="Fedorova N."/>
            <person name="Kim H.S."/>
            <person name="Shabalina S.A."/>
            <person name="Pearson T.R."/>
            <person name="Brinkac L."/>
            <person name="Tan P."/>
            <person name="Nandi T."/>
            <person name="Crabtree J."/>
            <person name="Badger J."/>
            <person name="Beckstrom-Sternberg S."/>
            <person name="Saqib M."/>
            <person name="Schutzer S.E."/>
            <person name="Keim P."/>
            <person name="Nierman W.C."/>
        </authorList>
    </citation>
    <scope>NUCLEOTIDE SEQUENCE [LARGE SCALE GENOMIC DNA]</scope>
    <source>
        <strain>1710b</strain>
    </source>
</reference>
<evidence type="ECO:0000255" key="1">
    <source>
        <dbReference type="HAMAP-Rule" id="MF_00435"/>
    </source>
</evidence>
<evidence type="ECO:0000255" key="2">
    <source>
        <dbReference type="PROSITE-ProRule" id="PRU01197"/>
    </source>
</evidence>
<evidence type="ECO:0000255" key="3">
    <source>
        <dbReference type="PROSITE-ProRule" id="PRU01198"/>
    </source>
</evidence>
<keyword id="KW-0028">Amino-acid biosynthesis</keyword>
<keyword id="KW-0100">Branched-chain amino acid biosynthesis</keyword>
<keyword id="KW-0460">Magnesium</keyword>
<keyword id="KW-0479">Metal-binding</keyword>
<keyword id="KW-0521">NADP</keyword>
<keyword id="KW-0560">Oxidoreductase</keyword>
<sequence>MKVFYDKDADLSLIKGKQVTIIGYGSQGHAHALNLKDSGVNVTVGLRRGGASWSKAENAGLAVKEVAEAVKGADVVMMLLPDEQIAAVYAQEVHANIKEGAALAFAHGFNVHYGQVIPRADLDVIMVAPKAPGHTVRGTYAQGGGVPHLIAVAQDKSGAARDIALSYAAANGGGRAGIIETNFREETETDLFGEQAVLCGGTVELIKAGFETLVEAGYAPEMAYFECLHELKLIVDLIYEGGIANMNYSISNNAEYGEYVTGPRVVTEETKKAMKQCLTDIQTGEYAKSFILENKAGAPTLQSRRRLTAEHQIEQVGSKLRAMMPWIAKNKLVDQSKN</sequence>
<proteinExistence type="inferred from homology"/>
<dbReference type="EC" id="1.1.1.86" evidence="1"/>
<dbReference type="EMBL" id="CP000124">
    <property type="protein sequence ID" value="ABA50313.1"/>
    <property type="molecule type" value="Genomic_DNA"/>
</dbReference>
<dbReference type="RefSeq" id="WP_004185539.1">
    <property type="nucleotide sequence ID" value="NC_007434.1"/>
</dbReference>
<dbReference type="SMR" id="Q3JUC2"/>
<dbReference type="EnsemblBacteria" id="ABA50313">
    <property type="protein sequence ID" value="ABA50313"/>
    <property type="gene ID" value="BURPS1710b_1421"/>
</dbReference>
<dbReference type="GeneID" id="93059680"/>
<dbReference type="KEGG" id="bpm:BURPS1710b_1421"/>
<dbReference type="HOGENOM" id="CLU_033821_0_1_4"/>
<dbReference type="UniPathway" id="UPA00047">
    <property type="reaction ID" value="UER00056"/>
</dbReference>
<dbReference type="UniPathway" id="UPA00049">
    <property type="reaction ID" value="UER00060"/>
</dbReference>
<dbReference type="Proteomes" id="UP000002700">
    <property type="component" value="Chromosome I"/>
</dbReference>
<dbReference type="GO" id="GO:0005829">
    <property type="term" value="C:cytosol"/>
    <property type="evidence" value="ECO:0007669"/>
    <property type="project" value="TreeGrafter"/>
</dbReference>
<dbReference type="GO" id="GO:0004455">
    <property type="term" value="F:ketol-acid reductoisomerase activity"/>
    <property type="evidence" value="ECO:0007669"/>
    <property type="project" value="UniProtKB-UniRule"/>
</dbReference>
<dbReference type="GO" id="GO:0000287">
    <property type="term" value="F:magnesium ion binding"/>
    <property type="evidence" value="ECO:0007669"/>
    <property type="project" value="UniProtKB-UniRule"/>
</dbReference>
<dbReference type="GO" id="GO:0050661">
    <property type="term" value="F:NADP binding"/>
    <property type="evidence" value="ECO:0007669"/>
    <property type="project" value="InterPro"/>
</dbReference>
<dbReference type="GO" id="GO:0009097">
    <property type="term" value="P:isoleucine biosynthetic process"/>
    <property type="evidence" value="ECO:0007669"/>
    <property type="project" value="UniProtKB-UniRule"/>
</dbReference>
<dbReference type="GO" id="GO:0009099">
    <property type="term" value="P:L-valine biosynthetic process"/>
    <property type="evidence" value="ECO:0007669"/>
    <property type="project" value="UniProtKB-UniRule"/>
</dbReference>
<dbReference type="FunFam" id="3.40.50.720:FF:000023">
    <property type="entry name" value="Ketol-acid reductoisomerase (NADP(+))"/>
    <property type="match status" value="1"/>
</dbReference>
<dbReference type="Gene3D" id="6.10.240.10">
    <property type="match status" value="1"/>
</dbReference>
<dbReference type="Gene3D" id="3.40.50.720">
    <property type="entry name" value="NAD(P)-binding Rossmann-like Domain"/>
    <property type="match status" value="1"/>
</dbReference>
<dbReference type="HAMAP" id="MF_00435">
    <property type="entry name" value="IlvC"/>
    <property type="match status" value="1"/>
</dbReference>
<dbReference type="InterPro" id="IPR008927">
    <property type="entry name" value="6-PGluconate_DH-like_C_sf"/>
</dbReference>
<dbReference type="InterPro" id="IPR013023">
    <property type="entry name" value="KARI"/>
</dbReference>
<dbReference type="InterPro" id="IPR000506">
    <property type="entry name" value="KARI_C"/>
</dbReference>
<dbReference type="InterPro" id="IPR013116">
    <property type="entry name" value="KARI_N"/>
</dbReference>
<dbReference type="InterPro" id="IPR014359">
    <property type="entry name" value="KARI_prok"/>
</dbReference>
<dbReference type="InterPro" id="IPR036291">
    <property type="entry name" value="NAD(P)-bd_dom_sf"/>
</dbReference>
<dbReference type="NCBIfam" id="TIGR00465">
    <property type="entry name" value="ilvC"/>
    <property type="match status" value="1"/>
</dbReference>
<dbReference type="NCBIfam" id="NF004017">
    <property type="entry name" value="PRK05479.1"/>
    <property type="match status" value="1"/>
</dbReference>
<dbReference type="NCBIfam" id="NF009940">
    <property type="entry name" value="PRK13403.1"/>
    <property type="match status" value="1"/>
</dbReference>
<dbReference type="PANTHER" id="PTHR21371">
    <property type="entry name" value="KETOL-ACID REDUCTOISOMERASE, MITOCHONDRIAL"/>
    <property type="match status" value="1"/>
</dbReference>
<dbReference type="PANTHER" id="PTHR21371:SF1">
    <property type="entry name" value="KETOL-ACID REDUCTOISOMERASE, MITOCHONDRIAL"/>
    <property type="match status" value="1"/>
</dbReference>
<dbReference type="Pfam" id="PF01450">
    <property type="entry name" value="KARI_C"/>
    <property type="match status" value="1"/>
</dbReference>
<dbReference type="Pfam" id="PF07991">
    <property type="entry name" value="KARI_N"/>
    <property type="match status" value="1"/>
</dbReference>
<dbReference type="PIRSF" id="PIRSF000116">
    <property type="entry name" value="IlvC_gammaproteo"/>
    <property type="match status" value="1"/>
</dbReference>
<dbReference type="SUPFAM" id="SSF48179">
    <property type="entry name" value="6-phosphogluconate dehydrogenase C-terminal domain-like"/>
    <property type="match status" value="1"/>
</dbReference>
<dbReference type="SUPFAM" id="SSF51735">
    <property type="entry name" value="NAD(P)-binding Rossmann-fold domains"/>
    <property type="match status" value="1"/>
</dbReference>
<dbReference type="PROSITE" id="PS51851">
    <property type="entry name" value="KARI_C"/>
    <property type="match status" value="1"/>
</dbReference>
<dbReference type="PROSITE" id="PS51850">
    <property type="entry name" value="KARI_N"/>
    <property type="match status" value="1"/>
</dbReference>
<comment type="function">
    <text evidence="1">Involved in the biosynthesis of branched-chain amino acids (BCAA). Catalyzes an alkyl-migration followed by a ketol-acid reduction of (S)-2-acetolactate (S2AL) to yield (R)-2,3-dihydroxy-isovalerate. In the isomerase reaction, S2AL is rearranged via a Mg-dependent methyl migration to produce 3-hydroxy-3-methyl-2-ketobutyrate (HMKB). In the reductase reaction, this 2-ketoacid undergoes a metal-dependent reduction by NADPH to yield (R)-2,3-dihydroxy-isovalerate.</text>
</comment>
<comment type="catalytic activity">
    <reaction evidence="1">
        <text>(2R)-2,3-dihydroxy-3-methylbutanoate + NADP(+) = (2S)-2-acetolactate + NADPH + H(+)</text>
        <dbReference type="Rhea" id="RHEA:22068"/>
        <dbReference type="ChEBI" id="CHEBI:15378"/>
        <dbReference type="ChEBI" id="CHEBI:49072"/>
        <dbReference type="ChEBI" id="CHEBI:57783"/>
        <dbReference type="ChEBI" id="CHEBI:58349"/>
        <dbReference type="ChEBI" id="CHEBI:58476"/>
        <dbReference type="EC" id="1.1.1.86"/>
    </reaction>
</comment>
<comment type="catalytic activity">
    <reaction evidence="1">
        <text>(2R,3R)-2,3-dihydroxy-3-methylpentanoate + NADP(+) = (S)-2-ethyl-2-hydroxy-3-oxobutanoate + NADPH + H(+)</text>
        <dbReference type="Rhea" id="RHEA:13493"/>
        <dbReference type="ChEBI" id="CHEBI:15378"/>
        <dbReference type="ChEBI" id="CHEBI:49256"/>
        <dbReference type="ChEBI" id="CHEBI:49258"/>
        <dbReference type="ChEBI" id="CHEBI:57783"/>
        <dbReference type="ChEBI" id="CHEBI:58349"/>
        <dbReference type="EC" id="1.1.1.86"/>
    </reaction>
</comment>
<comment type="cofactor">
    <cofactor evidence="1">
        <name>Mg(2+)</name>
        <dbReference type="ChEBI" id="CHEBI:18420"/>
    </cofactor>
    <text evidence="1">Binds 2 magnesium ions per subunit.</text>
</comment>
<comment type="pathway">
    <text evidence="1">Amino-acid biosynthesis; L-isoleucine biosynthesis; L-isoleucine from 2-oxobutanoate: step 2/4.</text>
</comment>
<comment type="pathway">
    <text evidence="1">Amino-acid biosynthesis; L-valine biosynthesis; L-valine from pyruvate: step 2/4.</text>
</comment>
<comment type="similarity">
    <text evidence="1">Belongs to the ketol-acid reductoisomerase family.</text>
</comment>
<name>ILVC_BURP1</name>
<protein>
    <recommendedName>
        <fullName evidence="1">Ketol-acid reductoisomerase (NADP(+))</fullName>
        <shortName evidence="1">KARI</shortName>
        <ecNumber evidence="1">1.1.1.86</ecNumber>
    </recommendedName>
    <alternativeName>
        <fullName evidence="1">Acetohydroxy-acid isomeroreductase</fullName>
        <shortName evidence="1">AHIR</shortName>
    </alternativeName>
    <alternativeName>
        <fullName evidence="1">Alpha-keto-beta-hydroxylacyl reductoisomerase</fullName>
    </alternativeName>
    <alternativeName>
        <fullName evidence="1">Ketol-acid reductoisomerase type 1</fullName>
    </alternativeName>
    <alternativeName>
        <fullName evidence="1">Ketol-acid reductoisomerase type I</fullName>
    </alternativeName>
</protein>
<feature type="chain" id="PRO_0000226167" description="Ketol-acid reductoisomerase (NADP(+))">
    <location>
        <begin position="1"/>
        <end position="338"/>
    </location>
</feature>
<feature type="domain" description="KARI N-terminal Rossmann" evidence="2">
    <location>
        <begin position="1"/>
        <end position="181"/>
    </location>
</feature>
<feature type="domain" description="KARI C-terminal knotted" evidence="3">
    <location>
        <begin position="182"/>
        <end position="327"/>
    </location>
</feature>
<feature type="active site" evidence="1">
    <location>
        <position position="107"/>
    </location>
</feature>
<feature type="binding site" evidence="1">
    <location>
        <begin position="24"/>
        <end position="27"/>
    </location>
    <ligand>
        <name>NADP(+)</name>
        <dbReference type="ChEBI" id="CHEBI:58349"/>
    </ligand>
</feature>
<feature type="binding site" evidence="1">
    <location>
        <position position="47"/>
    </location>
    <ligand>
        <name>NADP(+)</name>
        <dbReference type="ChEBI" id="CHEBI:58349"/>
    </ligand>
</feature>
<feature type="binding site" evidence="1">
    <location>
        <position position="52"/>
    </location>
    <ligand>
        <name>NADP(+)</name>
        <dbReference type="ChEBI" id="CHEBI:58349"/>
    </ligand>
</feature>
<feature type="binding site" evidence="1">
    <location>
        <position position="133"/>
    </location>
    <ligand>
        <name>NADP(+)</name>
        <dbReference type="ChEBI" id="CHEBI:58349"/>
    </ligand>
</feature>
<feature type="binding site" evidence="1">
    <location>
        <position position="190"/>
    </location>
    <ligand>
        <name>Mg(2+)</name>
        <dbReference type="ChEBI" id="CHEBI:18420"/>
        <label>1</label>
    </ligand>
</feature>
<feature type="binding site" evidence="1">
    <location>
        <position position="190"/>
    </location>
    <ligand>
        <name>Mg(2+)</name>
        <dbReference type="ChEBI" id="CHEBI:18420"/>
        <label>2</label>
    </ligand>
</feature>
<feature type="binding site" evidence="1">
    <location>
        <position position="194"/>
    </location>
    <ligand>
        <name>Mg(2+)</name>
        <dbReference type="ChEBI" id="CHEBI:18420"/>
        <label>1</label>
    </ligand>
</feature>
<feature type="binding site" evidence="1">
    <location>
        <position position="226"/>
    </location>
    <ligand>
        <name>Mg(2+)</name>
        <dbReference type="ChEBI" id="CHEBI:18420"/>
        <label>2</label>
    </ligand>
</feature>
<feature type="binding site" evidence="1">
    <location>
        <position position="230"/>
    </location>
    <ligand>
        <name>Mg(2+)</name>
        <dbReference type="ChEBI" id="CHEBI:18420"/>
        <label>2</label>
    </ligand>
</feature>
<feature type="binding site" evidence="1">
    <location>
        <position position="251"/>
    </location>
    <ligand>
        <name>substrate</name>
    </ligand>
</feature>
<accession>Q3JUC2</accession>
<organism>
    <name type="scientific">Burkholderia pseudomallei (strain 1710b)</name>
    <dbReference type="NCBI Taxonomy" id="320372"/>
    <lineage>
        <taxon>Bacteria</taxon>
        <taxon>Pseudomonadati</taxon>
        <taxon>Pseudomonadota</taxon>
        <taxon>Betaproteobacteria</taxon>
        <taxon>Burkholderiales</taxon>
        <taxon>Burkholderiaceae</taxon>
        <taxon>Burkholderia</taxon>
        <taxon>pseudomallei group</taxon>
    </lineage>
</organism>